<proteinExistence type="inferred from homology"/>
<keyword id="KW-0414">Isoprene biosynthesis</keyword>
<keyword id="KW-0548">Nucleotidyltransferase</keyword>
<keyword id="KW-1185">Reference proteome</keyword>
<keyword id="KW-0808">Transferase</keyword>
<sequence length="237" mass="25865">MQISSLSPPEIVAVLPAAGNGSRMQNDRPKQYLTIGNDATGHKTILEHTIDALLRHSRVQRVVVVISPDDTFFHTLAIANDPRICAVTGGKLRADSVLAGLAVVADSAWALVHDAARPCLHQDDLTRLLAIVEQSDVGGILAAPVRDTMKRSTDGFIDRTVERNDLWHALTPQLFPAALLKQCLQRALQDGVAVTDEASALEYCGYRPQIISGRSDNIKVTRPEDLALAEFYLTRLQ</sequence>
<organism>
    <name type="scientific">Pectobacterium atrosepticum (strain SCRI 1043 / ATCC BAA-672)</name>
    <name type="common">Erwinia carotovora subsp. atroseptica</name>
    <dbReference type="NCBI Taxonomy" id="218491"/>
    <lineage>
        <taxon>Bacteria</taxon>
        <taxon>Pseudomonadati</taxon>
        <taxon>Pseudomonadota</taxon>
        <taxon>Gammaproteobacteria</taxon>
        <taxon>Enterobacterales</taxon>
        <taxon>Pectobacteriaceae</taxon>
        <taxon>Pectobacterium</taxon>
    </lineage>
</organism>
<name>ISPD_PECAS</name>
<feature type="chain" id="PRO_0000237789" description="2-C-methyl-D-erythritol 4-phosphate cytidylyltransferase">
    <location>
        <begin position="1"/>
        <end position="237"/>
    </location>
</feature>
<feature type="site" description="Transition state stabilizer" evidence="1">
    <location>
        <position position="23"/>
    </location>
</feature>
<feature type="site" description="Transition state stabilizer" evidence="1">
    <location>
        <position position="30"/>
    </location>
</feature>
<feature type="site" description="Positions MEP for the nucleophilic attack" evidence="1">
    <location>
        <position position="163"/>
    </location>
</feature>
<feature type="site" description="Positions MEP for the nucleophilic attack" evidence="1">
    <location>
        <position position="219"/>
    </location>
</feature>
<dbReference type="EC" id="2.7.7.60" evidence="1"/>
<dbReference type="EMBL" id="BX950851">
    <property type="protein sequence ID" value="CAG76433.1"/>
    <property type="molecule type" value="Genomic_DNA"/>
</dbReference>
<dbReference type="RefSeq" id="WP_011095038.1">
    <property type="nucleotide sequence ID" value="NC_004547.2"/>
</dbReference>
<dbReference type="SMR" id="Q6D1B3"/>
<dbReference type="STRING" id="218491.ECA3535"/>
<dbReference type="GeneID" id="57210209"/>
<dbReference type="KEGG" id="eca:ECA3535"/>
<dbReference type="PATRIC" id="fig|218491.5.peg.3581"/>
<dbReference type="eggNOG" id="COG1211">
    <property type="taxonomic scope" value="Bacteria"/>
</dbReference>
<dbReference type="HOGENOM" id="CLU_061281_3_1_6"/>
<dbReference type="OrthoDB" id="9806837at2"/>
<dbReference type="UniPathway" id="UPA00056">
    <property type="reaction ID" value="UER00093"/>
</dbReference>
<dbReference type="Proteomes" id="UP000007966">
    <property type="component" value="Chromosome"/>
</dbReference>
<dbReference type="GO" id="GO:0050518">
    <property type="term" value="F:2-C-methyl-D-erythritol 4-phosphate cytidylyltransferase activity"/>
    <property type="evidence" value="ECO:0007669"/>
    <property type="project" value="UniProtKB-UniRule"/>
</dbReference>
<dbReference type="GO" id="GO:0019288">
    <property type="term" value="P:isopentenyl diphosphate biosynthetic process, methylerythritol 4-phosphate pathway"/>
    <property type="evidence" value="ECO:0007669"/>
    <property type="project" value="UniProtKB-UniRule"/>
</dbReference>
<dbReference type="CDD" id="cd02516">
    <property type="entry name" value="CDP-ME_synthetase"/>
    <property type="match status" value="1"/>
</dbReference>
<dbReference type="FunFam" id="3.90.550.10:FF:000003">
    <property type="entry name" value="2-C-methyl-D-erythritol 4-phosphate cytidylyltransferase"/>
    <property type="match status" value="1"/>
</dbReference>
<dbReference type="Gene3D" id="3.90.550.10">
    <property type="entry name" value="Spore Coat Polysaccharide Biosynthesis Protein SpsA, Chain A"/>
    <property type="match status" value="1"/>
</dbReference>
<dbReference type="HAMAP" id="MF_00108">
    <property type="entry name" value="IspD"/>
    <property type="match status" value="1"/>
</dbReference>
<dbReference type="InterPro" id="IPR001228">
    <property type="entry name" value="IspD"/>
</dbReference>
<dbReference type="InterPro" id="IPR034683">
    <property type="entry name" value="IspD/TarI"/>
</dbReference>
<dbReference type="InterPro" id="IPR050088">
    <property type="entry name" value="IspD/TarI_cytidylyltransf_bact"/>
</dbReference>
<dbReference type="InterPro" id="IPR029044">
    <property type="entry name" value="Nucleotide-diphossugar_trans"/>
</dbReference>
<dbReference type="NCBIfam" id="TIGR00453">
    <property type="entry name" value="ispD"/>
    <property type="match status" value="1"/>
</dbReference>
<dbReference type="PANTHER" id="PTHR32125">
    <property type="entry name" value="2-C-METHYL-D-ERYTHRITOL 4-PHOSPHATE CYTIDYLYLTRANSFERASE, CHLOROPLASTIC"/>
    <property type="match status" value="1"/>
</dbReference>
<dbReference type="PANTHER" id="PTHR32125:SF4">
    <property type="entry name" value="2-C-METHYL-D-ERYTHRITOL 4-PHOSPHATE CYTIDYLYLTRANSFERASE, CHLOROPLASTIC"/>
    <property type="match status" value="1"/>
</dbReference>
<dbReference type="Pfam" id="PF01128">
    <property type="entry name" value="IspD"/>
    <property type="match status" value="1"/>
</dbReference>
<dbReference type="SUPFAM" id="SSF53448">
    <property type="entry name" value="Nucleotide-diphospho-sugar transferases"/>
    <property type="match status" value="1"/>
</dbReference>
<gene>
    <name evidence="1" type="primary">ispD</name>
    <name type="ordered locus">ECA3535</name>
</gene>
<protein>
    <recommendedName>
        <fullName evidence="1">2-C-methyl-D-erythritol 4-phosphate cytidylyltransferase</fullName>
        <ecNumber evidence="1">2.7.7.60</ecNumber>
    </recommendedName>
    <alternativeName>
        <fullName evidence="1">4-diphosphocytidyl-2C-methyl-D-erythritol synthase</fullName>
    </alternativeName>
    <alternativeName>
        <fullName evidence="1">MEP cytidylyltransferase</fullName>
        <shortName evidence="1">MCT</shortName>
    </alternativeName>
</protein>
<comment type="function">
    <text evidence="1">Catalyzes the formation of 4-diphosphocytidyl-2-C-methyl-D-erythritol from CTP and 2-C-methyl-D-erythritol 4-phosphate (MEP).</text>
</comment>
<comment type="catalytic activity">
    <reaction evidence="1">
        <text>2-C-methyl-D-erythritol 4-phosphate + CTP + H(+) = 4-CDP-2-C-methyl-D-erythritol + diphosphate</text>
        <dbReference type="Rhea" id="RHEA:13429"/>
        <dbReference type="ChEBI" id="CHEBI:15378"/>
        <dbReference type="ChEBI" id="CHEBI:33019"/>
        <dbReference type="ChEBI" id="CHEBI:37563"/>
        <dbReference type="ChEBI" id="CHEBI:57823"/>
        <dbReference type="ChEBI" id="CHEBI:58262"/>
        <dbReference type="EC" id="2.7.7.60"/>
    </reaction>
</comment>
<comment type="pathway">
    <text evidence="1">Isoprenoid biosynthesis; isopentenyl diphosphate biosynthesis via DXP pathway; isopentenyl diphosphate from 1-deoxy-D-xylulose 5-phosphate: step 2/6.</text>
</comment>
<comment type="subunit">
    <text evidence="1">Homodimer.</text>
</comment>
<comment type="similarity">
    <text evidence="1">Belongs to the IspD/TarI cytidylyltransferase family. IspD subfamily.</text>
</comment>
<evidence type="ECO:0000255" key="1">
    <source>
        <dbReference type="HAMAP-Rule" id="MF_00108"/>
    </source>
</evidence>
<reference key="1">
    <citation type="journal article" date="2004" name="Proc. Natl. Acad. Sci. U.S.A.">
        <title>Genome sequence of the enterobacterial phytopathogen Erwinia carotovora subsp. atroseptica and characterization of virulence factors.</title>
        <authorList>
            <person name="Bell K.S."/>
            <person name="Sebaihia M."/>
            <person name="Pritchard L."/>
            <person name="Holden M.T.G."/>
            <person name="Hyman L.J."/>
            <person name="Holeva M.C."/>
            <person name="Thomson N.R."/>
            <person name="Bentley S.D."/>
            <person name="Churcher L.J.C."/>
            <person name="Mungall K."/>
            <person name="Atkin R."/>
            <person name="Bason N."/>
            <person name="Brooks K."/>
            <person name="Chillingworth T."/>
            <person name="Clark K."/>
            <person name="Doggett J."/>
            <person name="Fraser A."/>
            <person name="Hance Z."/>
            <person name="Hauser H."/>
            <person name="Jagels K."/>
            <person name="Moule S."/>
            <person name="Norbertczak H."/>
            <person name="Ormond D."/>
            <person name="Price C."/>
            <person name="Quail M.A."/>
            <person name="Sanders M."/>
            <person name="Walker D."/>
            <person name="Whitehead S."/>
            <person name="Salmond G.P.C."/>
            <person name="Birch P.R.J."/>
            <person name="Parkhill J."/>
            <person name="Toth I.K."/>
        </authorList>
    </citation>
    <scope>NUCLEOTIDE SEQUENCE [LARGE SCALE GENOMIC DNA]</scope>
    <source>
        <strain>SCRI 1043 / ATCC BAA-672</strain>
    </source>
</reference>
<accession>Q6D1B3</accession>